<feature type="chain" id="PRO_1000048878" description="tRNA modification GTPase MnmE">
    <location>
        <begin position="1"/>
        <end position="454"/>
    </location>
</feature>
<feature type="domain" description="TrmE-type G">
    <location>
        <begin position="216"/>
        <end position="377"/>
    </location>
</feature>
<feature type="binding site" evidence="1">
    <location>
        <position position="23"/>
    </location>
    <ligand>
        <name>(6S)-5-formyl-5,6,7,8-tetrahydrofolate</name>
        <dbReference type="ChEBI" id="CHEBI:57457"/>
    </ligand>
</feature>
<feature type="binding site" evidence="1">
    <location>
        <position position="80"/>
    </location>
    <ligand>
        <name>(6S)-5-formyl-5,6,7,8-tetrahydrofolate</name>
        <dbReference type="ChEBI" id="CHEBI:57457"/>
    </ligand>
</feature>
<feature type="binding site" evidence="1">
    <location>
        <position position="120"/>
    </location>
    <ligand>
        <name>(6S)-5-formyl-5,6,7,8-tetrahydrofolate</name>
        <dbReference type="ChEBI" id="CHEBI:57457"/>
    </ligand>
</feature>
<feature type="binding site" evidence="1">
    <location>
        <begin position="226"/>
        <end position="231"/>
    </location>
    <ligand>
        <name>GTP</name>
        <dbReference type="ChEBI" id="CHEBI:37565"/>
    </ligand>
</feature>
<feature type="binding site" evidence="1">
    <location>
        <position position="226"/>
    </location>
    <ligand>
        <name>K(+)</name>
        <dbReference type="ChEBI" id="CHEBI:29103"/>
    </ligand>
</feature>
<feature type="binding site" evidence="1">
    <location>
        <position position="230"/>
    </location>
    <ligand>
        <name>Mg(2+)</name>
        <dbReference type="ChEBI" id="CHEBI:18420"/>
    </ligand>
</feature>
<feature type="binding site" evidence="1">
    <location>
        <begin position="245"/>
        <end position="251"/>
    </location>
    <ligand>
        <name>GTP</name>
        <dbReference type="ChEBI" id="CHEBI:37565"/>
    </ligand>
</feature>
<feature type="binding site" evidence="1">
    <location>
        <position position="245"/>
    </location>
    <ligand>
        <name>K(+)</name>
        <dbReference type="ChEBI" id="CHEBI:29103"/>
    </ligand>
</feature>
<feature type="binding site" evidence="1">
    <location>
        <position position="247"/>
    </location>
    <ligand>
        <name>K(+)</name>
        <dbReference type="ChEBI" id="CHEBI:29103"/>
    </ligand>
</feature>
<feature type="binding site" evidence="1">
    <location>
        <position position="250"/>
    </location>
    <ligand>
        <name>K(+)</name>
        <dbReference type="ChEBI" id="CHEBI:29103"/>
    </ligand>
</feature>
<feature type="binding site" evidence="1">
    <location>
        <position position="251"/>
    </location>
    <ligand>
        <name>Mg(2+)</name>
        <dbReference type="ChEBI" id="CHEBI:18420"/>
    </ligand>
</feature>
<feature type="binding site" evidence="1">
    <location>
        <begin position="270"/>
        <end position="273"/>
    </location>
    <ligand>
        <name>GTP</name>
        <dbReference type="ChEBI" id="CHEBI:37565"/>
    </ligand>
</feature>
<feature type="binding site" evidence="1">
    <location>
        <begin position="335"/>
        <end position="338"/>
    </location>
    <ligand>
        <name>GTP</name>
        <dbReference type="ChEBI" id="CHEBI:37565"/>
    </ligand>
</feature>
<feature type="binding site" evidence="1">
    <location>
        <begin position="358"/>
        <end position="360"/>
    </location>
    <ligand>
        <name>GTP</name>
        <dbReference type="ChEBI" id="CHEBI:37565"/>
    </ligand>
</feature>
<feature type="binding site" evidence="1">
    <location>
        <position position="454"/>
    </location>
    <ligand>
        <name>(6S)-5-formyl-5,6,7,8-tetrahydrofolate</name>
        <dbReference type="ChEBI" id="CHEBI:57457"/>
    </ligand>
</feature>
<gene>
    <name evidence="1" type="primary">mnmE</name>
    <name evidence="1" type="synonym">trmE</name>
    <name type="ordered locus">SFV_3806</name>
</gene>
<dbReference type="EC" id="3.6.-.-" evidence="1"/>
<dbReference type="EMBL" id="CP000266">
    <property type="protein sequence ID" value="ABF05819.1"/>
    <property type="molecule type" value="Genomic_DNA"/>
</dbReference>
<dbReference type="RefSeq" id="WP_001282349.1">
    <property type="nucleotide sequence ID" value="NC_008258.1"/>
</dbReference>
<dbReference type="SMR" id="Q0SYP6"/>
<dbReference type="KEGG" id="sfv:SFV_3806"/>
<dbReference type="HOGENOM" id="CLU_019624_4_1_6"/>
<dbReference type="Proteomes" id="UP000000659">
    <property type="component" value="Chromosome"/>
</dbReference>
<dbReference type="GO" id="GO:0005829">
    <property type="term" value="C:cytosol"/>
    <property type="evidence" value="ECO:0007669"/>
    <property type="project" value="TreeGrafter"/>
</dbReference>
<dbReference type="GO" id="GO:0005525">
    <property type="term" value="F:GTP binding"/>
    <property type="evidence" value="ECO:0007669"/>
    <property type="project" value="UniProtKB-UniRule"/>
</dbReference>
<dbReference type="GO" id="GO:0003924">
    <property type="term" value="F:GTPase activity"/>
    <property type="evidence" value="ECO:0007669"/>
    <property type="project" value="UniProtKB-UniRule"/>
</dbReference>
<dbReference type="GO" id="GO:0046872">
    <property type="term" value="F:metal ion binding"/>
    <property type="evidence" value="ECO:0007669"/>
    <property type="project" value="UniProtKB-KW"/>
</dbReference>
<dbReference type="GO" id="GO:0030488">
    <property type="term" value="P:tRNA methylation"/>
    <property type="evidence" value="ECO:0007669"/>
    <property type="project" value="TreeGrafter"/>
</dbReference>
<dbReference type="GO" id="GO:0002098">
    <property type="term" value="P:tRNA wobble uridine modification"/>
    <property type="evidence" value="ECO:0007669"/>
    <property type="project" value="TreeGrafter"/>
</dbReference>
<dbReference type="CDD" id="cd04164">
    <property type="entry name" value="trmE"/>
    <property type="match status" value="1"/>
</dbReference>
<dbReference type="CDD" id="cd14858">
    <property type="entry name" value="TrmE_N"/>
    <property type="match status" value="1"/>
</dbReference>
<dbReference type="FunFam" id="3.30.1360.120:FF:000001">
    <property type="entry name" value="tRNA modification GTPase MnmE"/>
    <property type="match status" value="1"/>
</dbReference>
<dbReference type="FunFam" id="3.40.50.300:FF:000249">
    <property type="entry name" value="tRNA modification GTPase MnmE"/>
    <property type="match status" value="1"/>
</dbReference>
<dbReference type="Gene3D" id="3.40.50.300">
    <property type="entry name" value="P-loop containing nucleotide triphosphate hydrolases"/>
    <property type="match status" value="1"/>
</dbReference>
<dbReference type="Gene3D" id="3.30.1360.120">
    <property type="entry name" value="Probable tRNA modification gtpase trme, domain 1"/>
    <property type="match status" value="1"/>
</dbReference>
<dbReference type="Gene3D" id="1.20.120.430">
    <property type="entry name" value="tRNA modification GTPase MnmE domain 2"/>
    <property type="match status" value="1"/>
</dbReference>
<dbReference type="HAMAP" id="MF_00379">
    <property type="entry name" value="GTPase_MnmE"/>
    <property type="match status" value="1"/>
</dbReference>
<dbReference type="InterPro" id="IPR031168">
    <property type="entry name" value="G_TrmE"/>
</dbReference>
<dbReference type="InterPro" id="IPR006073">
    <property type="entry name" value="GTP-bd"/>
</dbReference>
<dbReference type="InterPro" id="IPR018948">
    <property type="entry name" value="GTP-bd_TrmE_N"/>
</dbReference>
<dbReference type="InterPro" id="IPR004520">
    <property type="entry name" value="GTPase_MnmE"/>
</dbReference>
<dbReference type="InterPro" id="IPR027368">
    <property type="entry name" value="MnmE_dom2"/>
</dbReference>
<dbReference type="InterPro" id="IPR025867">
    <property type="entry name" value="MnmE_helical"/>
</dbReference>
<dbReference type="InterPro" id="IPR027417">
    <property type="entry name" value="P-loop_NTPase"/>
</dbReference>
<dbReference type="InterPro" id="IPR005225">
    <property type="entry name" value="Small_GTP-bd"/>
</dbReference>
<dbReference type="InterPro" id="IPR027266">
    <property type="entry name" value="TrmE/GcvT_dom1"/>
</dbReference>
<dbReference type="NCBIfam" id="TIGR00450">
    <property type="entry name" value="mnmE_trmE_thdF"/>
    <property type="match status" value="1"/>
</dbReference>
<dbReference type="NCBIfam" id="NF003661">
    <property type="entry name" value="PRK05291.1-3"/>
    <property type="match status" value="1"/>
</dbReference>
<dbReference type="NCBIfam" id="TIGR00231">
    <property type="entry name" value="small_GTP"/>
    <property type="match status" value="1"/>
</dbReference>
<dbReference type="PANTHER" id="PTHR42714">
    <property type="entry name" value="TRNA MODIFICATION GTPASE GTPBP3"/>
    <property type="match status" value="1"/>
</dbReference>
<dbReference type="PANTHER" id="PTHR42714:SF2">
    <property type="entry name" value="TRNA MODIFICATION GTPASE GTPBP3, MITOCHONDRIAL"/>
    <property type="match status" value="1"/>
</dbReference>
<dbReference type="Pfam" id="PF01926">
    <property type="entry name" value="MMR_HSR1"/>
    <property type="match status" value="1"/>
</dbReference>
<dbReference type="Pfam" id="PF12631">
    <property type="entry name" value="MnmE_helical"/>
    <property type="match status" value="1"/>
</dbReference>
<dbReference type="Pfam" id="PF10396">
    <property type="entry name" value="TrmE_N"/>
    <property type="match status" value="1"/>
</dbReference>
<dbReference type="SUPFAM" id="SSF52540">
    <property type="entry name" value="P-loop containing nucleoside triphosphate hydrolases"/>
    <property type="match status" value="1"/>
</dbReference>
<dbReference type="SUPFAM" id="SSF116878">
    <property type="entry name" value="TrmE connector domain"/>
    <property type="match status" value="1"/>
</dbReference>
<dbReference type="PROSITE" id="PS51709">
    <property type="entry name" value="G_TRME"/>
    <property type="match status" value="1"/>
</dbReference>
<sequence length="454" mass="49249">MSDNDTIVAQATPPGRGGVGILRISGFKAREVAETVLGKLPKPRYADYLPFKDADGSVLDQGIALWFPGPNSFTGEDVLELQGHGGPVILDLLLKRILTIPGLRIARPGEFSERAFLNDKLDLAQAEAIADLIDASSEQAARSALNSLQGAFSARVNHLVEALTHLRIYVEAAIDFPDEEIDFLSDGKIEAQLNDVMADLDAVRAEARQGSLLREGMKVVIAGRPNAGKSSLLNALAGREAAIVTDIAGTTRDVLREHIHIDGMPLHIIDTAGLREASDEVERIGIERAWQEIEQADRVLFMVDGTTTDAVDPAEIWPEFIARLPAKLPITVVRNKADITGETLGMSEVNGHALIRLSARTGEGVDVLRNHLKQSMGFDTNMEGGFLARRRHLQALEQAAEHLQQGKAQLLGAWAGELLAEELRLAQQNLSEITGEFTSDDLLGRIFSSFCIGK</sequence>
<protein>
    <recommendedName>
        <fullName evidence="1">tRNA modification GTPase MnmE</fullName>
        <ecNumber evidence="1">3.6.-.-</ecNumber>
    </recommendedName>
</protein>
<proteinExistence type="inferred from homology"/>
<keyword id="KW-0963">Cytoplasm</keyword>
<keyword id="KW-0342">GTP-binding</keyword>
<keyword id="KW-0378">Hydrolase</keyword>
<keyword id="KW-0460">Magnesium</keyword>
<keyword id="KW-0479">Metal-binding</keyword>
<keyword id="KW-0547">Nucleotide-binding</keyword>
<keyword id="KW-0630">Potassium</keyword>
<keyword id="KW-0819">tRNA processing</keyword>
<name>MNME_SHIF8</name>
<evidence type="ECO:0000255" key="1">
    <source>
        <dbReference type="HAMAP-Rule" id="MF_00379"/>
    </source>
</evidence>
<accession>Q0SYP6</accession>
<organism>
    <name type="scientific">Shigella flexneri serotype 5b (strain 8401)</name>
    <dbReference type="NCBI Taxonomy" id="373384"/>
    <lineage>
        <taxon>Bacteria</taxon>
        <taxon>Pseudomonadati</taxon>
        <taxon>Pseudomonadota</taxon>
        <taxon>Gammaproteobacteria</taxon>
        <taxon>Enterobacterales</taxon>
        <taxon>Enterobacteriaceae</taxon>
        <taxon>Shigella</taxon>
    </lineage>
</organism>
<comment type="function">
    <text evidence="1">Exhibits a very high intrinsic GTPase hydrolysis rate. Involved in the addition of a carboxymethylaminomethyl (cmnm) group at the wobble position (U34) of certain tRNAs, forming tRNA-cmnm(5)s(2)U34.</text>
</comment>
<comment type="cofactor">
    <cofactor evidence="1">
        <name>K(+)</name>
        <dbReference type="ChEBI" id="CHEBI:29103"/>
    </cofactor>
    <text evidence="1">Binds 1 potassium ion per subunit.</text>
</comment>
<comment type="subunit">
    <text evidence="1">Homodimer. Heterotetramer of two MnmE and two MnmG subunits.</text>
</comment>
<comment type="subcellular location">
    <subcellularLocation>
        <location evidence="1">Cytoplasm</location>
    </subcellularLocation>
</comment>
<comment type="similarity">
    <text evidence="1">Belongs to the TRAFAC class TrmE-Era-EngA-EngB-Septin-like GTPase superfamily. TrmE GTPase family.</text>
</comment>
<reference key="1">
    <citation type="journal article" date="2006" name="BMC Genomics">
        <title>Complete genome sequence of Shigella flexneri 5b and comparison with Shigella flexneri 2a.</title>
        <authorList>
            <person name="Nie H."/>
            <person name="Yang F."/>
            <person name="Zhang X."/>
            <person name="Yang J."/>
            <person name="Chen L."/>
            <person name="Wang J."/>
            <person name="Xiong Z."/>
            <person name="Peng J."/>
            <person name="Sun L."/>
            <person name="Dong J."/>
            <person name="Xue Y."/>
            <person name="Xu X."/>
            <person name="Chen S."/>
            <person name="Yao Z."/>
            <person name="Shen Y."/>
            <person name="Jin Q."/>
        </authorList>
    </citation>
    <scope>NUCLEOTIDE SEQUENCE [LARGE SCALE GENOMIC DNA]</scope>
    <source>
        <strain>8401</strain>
    </source>
</reference>